<accession>B7M7L3</accession>
<protein>
    <recommendedName>
        <fullName evidence="1">Exodeoxyribonuclease 7 large subunit</fullName>
        <ecNumber evidence="1">3.1.11.6</ecNumber>
    </recommendedName>
    <alternativeName>
        <fullName evidence="1">Exodeoxyribonuclease VII large subunit</fullName>
        <shortName evidence="1">Exonuclease VII large subunit</shortName>
    </alternativeName>
</protein>
<gene>
    <name evidence="1" type="primary">xseA</name>
    <name type="ordered locus">ECIAI1_2561</name>
</gene>
<evidence type="ECO:0000255" key="1">
    <source>
        <dbReference type="HAMAP-Rule" id="MF_00378"/>
    </source>
</evidence>
<feature type="chain" id="PRO_1000122056" description="Exodeoxyribonuclease 7 large subunit">
    <location>
        <begin position="1"/>
        <end position="456"/>
    </location>
</feature>
<keyword id="KW-0963">Cytoplasm</keyword>
<keyword id="KW-0269">Exonuclease</keyword>
<keyword id="KW-0378">Hydrolase</keyword>
<keyword id="KW-0540">Nuclease</keyword>
<dbReference type="EC" id="3.1.11.6" evidence="1"/>
<dbReference type="EMBL" id="CU928160">
    <property type="protein sequence ID" value="CAQ99401.1"/>
    <property type="molecule type" value="Genomic_DNA"/>
</dbReference>
<dbReference type="RefSeq" id="WP_000937933.1">
    <property type="nucleotide sequence ID" value="NC_011741.1"/>
</dbReference>
<dbReference type="SMR" id="B7M7L3"/>
<dbReference type="GeneID" id="93774627"/>
<dbReference type="KEGG" id="ecr:ECIAI1_2561"/>
<dbReference type="HOGENOM" id="CLU_023625_3_1_6"/>
<dbReference type="GO" id="GO:0005737">
    <property type="term" value="C:cytoplasm"/>
    <property type="evidence" value="ECO:0007669"/>
    <property type="project" value="UniProtKB-SubCell"/>
</dbReference>
<dbReference type="GO" id="GO:0009318">
    <property type="term" value="C:exodeoxyribonuclease VII complex"/>
    <property type="evidence" value="ECO:0007669"/>
    <property type="project" value="InterPro"/>
</dbReference>
<dbReference type="GO" id="GO:0008855">
    <property type="term" value="F:exodeoxyribonuclease VII activity"/>
    <property type="evidence" value="ECO:0007669"/>
    <property type="project" value="UniProtKB-UniRule"/>
</dbReference>
<dbReference type="GO" id="GO:0003676">
    <property type="term" value="F:nucleic acid binding"/>
    <property type="evidence" value="ECO:0007669"/>
    <property type="project" value="InterPro"/>
</dbReference>
<dbReference type="GO" id="GO:0006308">
    <property type="term" value="P:DNA catabolic process"/>
    <property type="evidence" value="ECO:0007669"/>
    <property type="project" value="UniProtKB-UniRule"/>
</dbReference>
<dbReference type="CDD" id="cd04489">
    <property type="entry name" value="ExoVII_LU_OBF"/>
    <property type="match status" value="1"/>
</dbReference>
<dbReference type="HAMAP" id="MF_00378">
    <property type="entry name" value="Exonuc_7_L"/>
    <property type="match status" value="1"/>
</dbReference>
<dbReference type="InterPro" id="IPR003753">
    <property type="entry name" value="Exonuc_VII_L"/>
</dbReference>
<dbReference type="InterPro" id="IPR020579">
    <property type="entry name" value="Exonuc_VII_lsu_C"/>
</dbReference>
<dbReference type="InterPro" id="IPR025824">
    <property type="entry name" value="OB-fold_nuc-bd_dom"/>
</dbReference>
<dbReference type="NCBIfam" id="TIGR00237">
    <property type="entry name" value="xseA"/>
    <property type="match status" value="1"/>
</dbReference>
<dbReference type="PANTHER" id="PTHR30008">
    <property type="entry name" value="EXODEOXYRIBONUCLEASE 7 LARGE SUBUNIT"/>
    <property type="match status" value="1"/>
</dbReference>
<dbReference type="PANTHER" id="PTHR30008:SF0">
    <property type="entry name" value="EXODEOXYRIBONUCLEASE 7 LARGE SUBUNIT"/>
    <property type="match status" value="1"/>
</dbReference>
<dbReference type="Pfam" id="PF02601">
    <property type="entry name" value="Exonuc_VII_L"/>
    <property type="match status" value="1"/>
</dbReference>
<dbReference type="Pfam" id="PF13742">
    <property type="entry name" value="tRNA_anti_2"/>
    <property type="match status" value="1"/>
</dbReference>
<organism>
    <name type="scientific">Escherichia coli O8 (strain IAI1)</name>
    <dbReference type="NCBI Taxonomy" id="585034"/>
    <lineage>
        <taxon>Bacteria</taxon>
        <taxon>Pseudomonadati</taxon>
        <taxon>Pseudomonadota</taxon>
        <taxon>Gammaproteobacteria</taxon>
        <taxon>Enterobacterales</taxon>
        <taxon>Enterobacteriaceae</taxon>
        <taxon>Escherichia</taxon>
    </lineage>
</organism>
<proteinExistence type="inferred from homology"/>
<sequence length="456" mass="51860">MLPSQSPAIFTVSRLNQTVRLLLEHEMGQVWISGEISNFTQPASGHWYFTLKDDTAQVRCAMFRNSNRRVTFRPQHGQQVLVRANITLYEPRGDYQIIVESMQPAGEGLLQQKYEQLKAKLQAEGLFDQQYKKPLPSPAHCVGVITSKTGAALHDILHVLKRRDPSLPVIIYPTAVQGDDAPGQIVRAIELANQRNECDVLIVGRGGGSLEDLWSFNDERVARAIFASRIPVVSAVGHETDVTIADFVADLRAPTPSAAAEVVSRNQQELLRQVQSTRQRLEMAMDYYLANRTRRFTQIHHRLQQQHPQLRLARQQTMLERLQKRMSFALENQLKRTGQQQQRLTQRLNQQNPQPKIHRAQTRIQQLEYRLAETLRVQLSATRERFGNAVTHLEAVSPLSTLARGYSVTTATDGNVLKKVKQVKAGEMLTTRLEDGWIESEVKNIQPVKKSRKKVH</sequence>
<comment type="function">
    <text evidence="1">Bidirectionally degrades single-stranded DNA into large acid-insoluble oligonucleotides, which are then degraded further into small acid-soluble oligonucleotides.</text>
</comment>
<comment type="catalytic activity">
    <reaction evidence="1">
        <text>Exonucleolytic cleavage in either 5'- to 3'- or 3'- to 5'-direction to yield nucleoside 5'-phosphates.</text>
        <dbReference type="EC" id="3.1.11.6"/>
    </reaction>
</comment>
<comment type="subunit">
    <text evidence="1">Heterooligomer composed of large and small subunits.</text>
</comment>
<comment type="subcellular location">
    <subcellularLocation>
        <location evidence="1">Cytoplasm</location>
    </subcellularLocation>
</comment>
<comment type="similarity">
    <text evidence="1">Belongs to the XseA family.</text>
</comment>
<name>EX7L_ECO8A</name>
<reference key="1">
    <citation type="journal article" date="2009" name="PLoS Genet.">
        <title>Organised genome dynamics in the Escherichia coli species results in highly diverse adaptive paths.</title>
        <authorList>
            <person name="Touchon M."/>
            <person name="Hoede C."/>
            <person name="Tenaillon O."/>
            <person name="Barbe V."/>
            <person name="Baeriswyl S."/>
            <person name="Bidet P."/>
            <person name="Bingen E."/>
            <person name="Bonacorsi S."/>
            <person name="Bouchier C."/>
            <person name="Bouvet O."/>
            <person name="Calteau A."/>
            <person name="Chiapello H."/>
            <person name="Clermont O."/>
            <person name="Cruveiller S."/>
            <person name="Danchin A."/>
            <person name="Diard M."/>
            <person name="Dossat C."/>
            <person name="Karoui M.E."/>
            <person name="Frapy E."/>
            <person name="Garry L."/>
            <person name="Ghigo J.M."/>
            <person name="Gilles A.M."/>
            <person name="Johnson J."/>
            <person name="Le Bouguenec C."/>
            <person name="Lescat M."/>
            <person name="Mangenot S."/>
            <person name="Martinez-Jehanne V."/>
            <person name="Matic I."/>
            <person name="Nassif X."/>
            <person name="Oztas S."/>
            <person name="Petit M.A."/>
            <person name="Pichon C."/>
            <person name="Rouy Z."/>
            <person name="Ruf C.S."/>
            <person name="Schneider D."/>
            <person name="Tourret J."/>
            <person name="Vacherie B."/>
            <person name="Vallenet D."/>
            <person name="Medigue C."/>
            <person name="Rocha E.P.C."/>
            <person name="Denamur E."/>
        </authorList>
    </citation>
    <scope>NUCLEOTIDE SEQUENCE [LARGE SCALE GENOMIC DNA]</scope>
    <source>
        <strain>IAI1</strain>
    </source>
</reference>